<evidence type="ECO:0000255" key="1">
    <source>
        <dbReference type="HAMAP-Rule" id="MF_00031"/>
    </source>
</evidence>
<keyword id="KW-0963">Cytoplasm</keyword>
<keyword id="KW-0227">DNA damage</keyword>
<keyword id="KW-0233">DNA recombination</keyword>
<keyword id="KW-0234">DNA repair</keyword>
<keyword id="KW-0238">DNA-binding</keyword>
<reference key="1">
    <citation type="journal article" date="2005" name="Jpn. Agric. Res. Q.">
        <title>Genome sequence of Xanthomonas oryzae pv. oryzae suggests contribution of large numbers of effector genes and insertion sequences to its race diversity.</title>
        <authorList>
            <person name="Ochiai H."/>
            <person name="Inoue Y."/>
            <person name="Takeya M."/>
            <person name="Sasaki A."/>
            <person name="Kaku H."/>
        </authorList>
    </citation>
    <scope>NUCLEOTIDE SEQUENCE [LARGE SCALE GENOMIC DNA]</scope>
    <source>
        <strain>MAFF 311018</strain>
    </source>
</reference>
<comment type="function">
    <text evidence="1">The RuvA-RuvB-RuvC complex processes Holliday junction (HJ) DNA during genetic recombination and DNA repair, while the RuvA-RuvB complex plays an important role in the rescue of blocked DNA replication forks via replication fork reversal (RFR). RuvA specifically binds to HJ cruciform DNA, conferring on it an open structure. The RuvB hexamer acts as an ATP-dependent pump, pulling dsDNA into and through the RuvAB complex. HJ branch migration allows RuvC to scan DNA until it finds its consensus sequence, where it cleaves and resolves the cruciform DNA.</text>
</comment>
<comment type="subunit">
    <text evidence="1">Homotetramer. Forms an RuvA(8)-RuvB(12)-Holliday junction (HJ) complex. HJ DNA is sandwiched between 2 RuvA tetramers; dsDNA enters through RuvA and exits via RuvB. An RuvB hexamer assembles on each DNA strand where it exits the tetramer. Each RuvB hexamer is contacted by two RuvA subunits (via domain III) on 2 adjacent RuvB subunits; this complex drives branch migration. In the full resolvosome a probable DNA-RuvA(4)-RuvB(12)-RuvC(2) complex forms which resolves the HJ.</text>
</comment>
<comment type="subcellular location">
    <subcellularLocation>
        <location evidence="1">Cytoplasm</location>
    </subcellularLocation>
</comment>
<comment type="domain">
    <text evidence="1">Has three domains with a flexible linker between the domains II and III and assumes an 'L' shape. Domain III is highly mobile and contacts RuvB.</text>
</comment>
<comment type="similarity">
    <text evidence="1">Belongs to the RuvA family.</text>
</comment>
<gene>
    <name evidence="1" type="primary">ruvA</name>
    <name type="ordered locus">XOO1545</name>
</gene>
<sequence>MIGRLRGILAYKQPPWLVIDVGGVGYELEAPMSTFYDLPDVGRDVILFTHYAQKEDSVSLYGFLREGERRLFRDVQKVTGIGAKIALAVLSGVTVDEFARLITSGDITALTRIPGIGKKTAERMVVELRDRAADFSSGAPITGQLGPDAISEATVALQQLGYKPAEAARMARDAGAEGGEVATVIRKALQAALR</sequence>
<organism>
    <name type="scientific">Xanthomonas oryzae pv. oryzae (strain MAFF 311018)</name>
    <dbReference type="NCBI Taxonomy" id="342109"/>
    <lineage>
        <taxon>Bacteria</taxon>
        <taxon>Pseudomonadati</taxon>
        <taxon>Pseudomonadota</taxon>
        <taxon>Gammaproteobacteria</taxon>
        <taxon>Lysobacterales</taxon>
        <taxon>Lysobacteraceae</taxon>
        <taxon>Xanthomonas</taxon>
    </lineage>
</organism>
<feature type="chain" id="PRO_1000002593" description="Holliday junction branch migration complex subunit RuvA">
    <location>
        <begin position="1"/>
        <end position="194"/>
    </location>
</feature>
<feature type="region of interest" description="Domain I" evidence="1">
    <location>
        <begin position="1"/>
        <end position="64"/>
    </location>
</feature>
<feature type="region of interest" description="Domain II" evidence="1">
    <location>
        <begin position="65"/>
        <end position="140"/>
    </location>
</feature>
<feature type="region of interest" description="Flexible linker" evidence="1">
    <location>
        <begin position="140"/>
        <end position="144"/>
    </location>
</feature>
<feature type="region of interest" description="Domain III" evidence="1">
    <location>
        <begin position="145"/>
        <end position="194"/>
    </location>
</feature>
<protein>
    <recommendedName>
        <fullName evidence="1">Holliday junction branch migration complex subunit RuvA</fullName>
    </recommendedName>
</protein>
<accession>Q2P577</accession>
<dbReference type="EMBL" id="AP008229">
    <property type="protein sequence ID" value="BAE68300.1"/>
    <property type="molecule type" value="Genomic_DNA"/>
</dbReference>
<dbReference type="RefSeq" id="WP_011258432.1">
    <property type="nucleotide sequence ID" value="NC_007705.1"/>
</dbReference>
<dbReference type="SMR" id="Q2P577"/>
<dbReference type="KEGG" id="xom:XOO1545"/>
<dbReference type="HOGENOM" id="CLU_087936_0_0_6"/>
<dbReference type="GO" id="GO:0005737">
    <property type="term" value="C:cytoplasm"/>
    <property type="evidence" value="ECO:0007669"/>
    <property type="project" value="UniProtKB-SubCell"/>
</dbReference>
<dbReference type="GO" id="GO:0009379">
    <property type="term" value="C:Holliday junction helicase complex"/>
    <property type="evidence" value="ECO:0007669"/>
    <property type="project" value="InterPro"/>
</dbReference>
<dbReference type="GO" id="GO:0048476">
    <property type="term" value="C:Holliday junction resolvase complex"/>
    <property type="evidence" value="ECO:0007669"/>
    <property type="project" value="UniProtKB-UniRule"/>
</dbReference>
<dbReference type="GO" id="GO:0005524">
    <property type="term" value="F:ATP binding"/>
    <property type="evidence" value="ECO:0007669"/>
    <property type="project" value="InterPro"/>
</dbReference>
<dbReference type="GO" id="GO:0000400">
    <property type="term" value="F:four-way junction DNA binding"/>
    <property type="evidence" value="ECO:0007669"/>
    <property type="project" value="UniProtKB-UniRule"/>
</dbReference>
<dbReference type="GO" id="GO:0009378">
    <property type="term" value="F:four-way junction helicase activity"/>
    <property type="evidence" value="ECO:0007669"/>
    <property type="project" value="InterPro"/>
</dbReference>
<dbReference type="GO" id="GO:0006310">
    <property type="term" value="P:DNA recombination"/>
    <property type="evidence" value="ECO:0007669"/>
    <property type="project" value="UniProtKB-UniRule"/>
</dbReference>
<dbReference type="GO" id="GO:0006281">
    <property type="term" value="P:DNA repair"/>
    <property type="evidence" value="ECO:0007669"/>
    <property type="project" value="UniProtKB-UniRule"/>
</dbReference>
<dbReference type="CDD" id="cd14332">
    <property type="entry name" value="UBA_RuvA_C"/>
    <property type="match status" value="1"/>
</dbReference>
<dbReference type="Gene3D" id="1.10.150.20">
    <property type="entry name" value="5' to 3' exonuclease, C-terminal subdomain"/>
    <property type="match status" value="1"/>
</dbReference>
<dbReference type="Gene3D" id="1.10.8.10">
    <property type="entry name" value="DNA helicase RuvA subunit, C-terminal domain"/>
    <property type="match status" value="1"/>
</dbReference>
<dbReference type="Gene3D" id="2.40.50.140">
    <property type="entry name" value="Nucleic acid-binding proteins"/>
    <property type="match status" value="1"/>
</dbReference>
<dbReference type="HAMAP" id="MF_00031">
    <property type="entry name" value="DNA_HJ_migration_RuvA"/>
    <property type="match status" value="1"/>
</dbReference>
<dbReference type="InterPro" id="IPR013849">
    <property type="entry name" value="DNA_helicase_Holl-junc_RuvA_I"/>
</dbReference>
<dbReference type="InterPro" id="IPR003583">
    <property type="entry name" value="Hlx-hairpin-Hlx_DNA-bd_motif"/>
</dbReference>
<dbReference type="InterPro" id="IPR012340">
    <property type="entry name" value="NA-bd_OB-fold"/>
</dbReference>
<dbReference type="InterPro" id="IPR000085">
    <property type="entry name" value="RuvA"/>
</dbReference>
<dbReference type="InterPro" id="IPR010994">
    <property type="entry name" value="RuvA_2-like"/>
</dbReference>
<dbReference type="InterPro" id="IPR011114">
    <property type="entry name" value="RuvA_C"/>
</dbReference>
<dbReference type="InterPro" id="IPR036267">
    <property type="entry name" value="RuvA_C_sf"/>
</dbReference>
<dbReference type="NCBIfam" id="TIGR00084">
    <property type="entry name" value="ruvA"/>
    <property type="match status" value="1"/>
</dbReference>
<dbReference type="Pfam" id="PF14520">
    <property type="entry name" value="HHH_5"/>
    <property type="match status" value="1"/>
</dbReference>
<dbReference type="Pfam" id="PF07499">
    <property type="entry name" value="RuvA_C"/>
    <property type="match status" value="1"/>
</dbReference>
<dbReference type="Pfam" id="PF01330">
    <property type="entry name" value="RuvA_N"/>
    <property type="match status" value="1"/>
</dbReference>
<dbReference type="SMART" id="SM00278">
    <property type="entry name" value="HhH1"/>
    <property type="match status" value="2"/>
</dbReference>
<dbReference type="SUPFAM" id="SSF46929">
    <property type="entry name" value="DNA helicase RuvA subunit, C-terminal domain"/>
    <property type="match status" value="1"/>
</dbReference>
<dbReference type="SUPFAM" id="SSF50249">
    <property type="entry name" value="Nucleic acid-binding proteins"/>
    <property type="match status" value="1"/>
</dbReference>
<dbReference type="SUPFAM" id="SSF47781">
    <property type="entry name" value="RuvA domain 2-like"/>
    <property type="match status" value="1"/>
</dbReference>
<name>RUVA_XANOM</name>
<proteinExistence type="inferred from homology"/>